<sequence length="252" mass="27024">MSKSVPLQRIVLVAALMATGGLAGGCSSIDRLAAIGERPALTPIENPTTQPGYKPVQMPMPKPEVASYNANSLWRNGSRAFFKDQRAAKVGDILTVTVNFTDKANIANETQRSRTSKEDSGITDFIGSKTITTPATAVLPGRILTTDSTSSSDGKGSVQRQEALQTNVAAVVTQVLPNGNLVVEGKQEIRVNFEIRELIVAGIVRPEDIQSDNTIDSSKIAQARIAYGGRGQITDVQQPRYGQQVMDVLLPF</sequence>
<protein>
    <recommendedName>
        <fullName evidence="1">Flagellar L-ring protein</fullName>
    </recommendedName>
    <alternativeName>
        <fullName evidence="1">Basal body L-ring protein</fullName>
    </alternativeName>
</protein>
<feature type="signal peptide" evidence="1">
    <location>
        <begin position="1"/>
        <end position="25"/>
    </location>
</feature>
<feature type="chain" id="PRO_5000378047" description="Flagellar L-ring protein">
    <location>
        <begin position="26"/>
        <end position="252"/>
    </location>
</feature>
<feature type="lipid moiety-binding region" description="N-palmitoyl cysteine" evidence="1">
    <location>
        <position position="26"/>
    </location>
</feature>
<feature type="lipid moiety-binding region" description="S-diacylglycerol cysteine" evidence="1">
    <location>
        <position position="26"/>
    </location>
</feature>
<organism>
    <name type="scientific">Rhodopseudomonas palustris (strain TIE-1)</name>
    <dbReference type="NCBI Taxonomy" id="395960"/>
    <lineage>
        <taxon>Bacteria</taxon>
        <taxon>Pseudomonadati</taxon>
        <taxon>Pseudomonadota</taxon>
        <taxon>Alphaproteobacteria</taxon>
        <taxon>Hyphomicrobiales</taxon>
        <taxon>Nitrobacteraceae</taxon>
        <taxon>Rhodopseudomonas</taxon>
    </lineage>
</organism>
<accession>B3QIW5</accession>
<dbReference type="EMBL" id="CP001096">
    <property type="protein sequence ID" value="ACF02921.1"/>
    <property type="molecule type" value="Genomic_DNA"/>
</dbReference>
<dbReference type="RefSeq" id="WP_011159438.1">
    <property type="nucleotide sequence ID" value="NC_011004.1"/>
</dbReference>
<dbReference type="SMR" id="B3QIW5"/>
<dbReference type="GeneID" id="66895018"/>
<dbReference type="KEGG" id="rpt:Rpal_4425"/>
<dbReference type="HOGENOM" id="CLU_069313_1_2_5"/>
<dbReference type="OrthoDB" id="9789227at2"/>
<dbReference type="Proteomes" id="UP000001725">
    <property type="component" value="Chromosome"/>
</dbReference>
<dbReference type="GO" id="GO:0009427">
    <property type="term" value="C:bacterial-type flagellum basal body, distal rod, L ring"/>
    <property type="evidence" value="ECO:0007669"/>
    <property type="project" value="InterPro"/>
</dbReference>
<dbReference type="GO" id="GO:0009279">
    <property type="term" value="C:cell outer membrane"/>
    <property type="evidence" value="ECO:0007669"/>
    <property type="project" value="UniProtKB-SubCell"/>
</dbReference>
<dbReference type="GO" id="GO:0003774">
    <property type="term" value="F:cytoskeletal motor activity"/>
    <property type="evidence" value="ECO:0007669"/>
    <property type="project" value="InterPro"/>
</dbReference>
<dbReference type="GO" id="GO:0071973">
    <property type="term" value="P:bacterial-type flagellum-dependent cell motility"/>
    <property type="evidence" value="ECO:0007669"/>
    <property type="project" value="InterPro"/>
</dbReference>
<dbReference type="HAMAP" id="MF_00415">
    <property type="entry name" value="FlgH"/>
    <property type="match status" value="1"/>
</dbReference>
<dbReference type="InterPro" id="IPR000527">
    <property type="entry name" value="Flag_Lring"/>
</dbReference>
<dbReference type="NCBIfam" id="NF001305">
    <property type="entry name" value="PRK00249.1-5"/>
    <property type="match status" value="1"/>
</dbReference>
<dbReference type="PANTHER" id="PTHR34933">
    <property type="entry name" value="FLAGELLAR L-RING PROTEIN"/>
    <property type="match status" value="1"/>
</dbReference>
<dbReference type="PANTHER" id="PTHR34933:SF1">
    <property type="entry name" value="FLAGELLAR L-RING PROTEIN"/>
    <property type="match status" value="1"/>
</dbReference>
<dbReference type="Pfam" id="PF02107">
    <property type="entry name" value="FlgH"/>
    <property type="match status" value="1"/>
</dbReference>
<dbReference type="PRINTS" id="PR01008">
    <property type="entry name" value="FLGLRINGFLGH"/>
</dbReference>
<dbReference type="PROSITE" id="PS51257">
    <property type="entry name" value="PROKAR_LIPOPROTEIN"/>
    <property type="match status" value="1"/>
</dbReference>
<evidence type="ECO:0000255" key="1">
    <source>
        <dbReference type="HAMAP-Rule" id="MF_00415"/>
    </source>
</evidence>
<comment type="function">
    <text evidence="1">Assembles around the rod to form the L-ring and probably protects the motor/basal body from shearing forces during rotation.</text>
</comment>
<comment type="subunit">
    <text evidence="1">The basal body constitutes a major portion of the flagellar organelle and consists of four rings (L,P,S, and M) mounted on a central rod.</text>
</comment>
<comment type="subcellular location">
    <subcellularLocation>
        <location evidence="1">Cell outer membrane</location>
        <topology evidence="1">Lipid-anchor</topology>
    </subcellularLocation>
    <subcellularLocation>
        <location evidence="1">Bacterial flagellum basal body</location>
    </subcellularLocation>
</comment>
<comment type="similarity">
    <text evidence="1">Belongs to the FlgH family.</text>
</comment>
<proteinExistence type="inferred from homology"/>
<keyword id="KW-0975">Bacterial flagellum</keyword>
<keyword id="KW-0998">Cell outer membrane</keyword>
<keyword id="KW-0449">Lipoprotein</keyword>
<keyword id="KW-0472">Membrane</keyword>
<keyword id="KW-0564">Palmitate</keyword>
<keyword id="KW-0732">Signal</keyword>
<name>FLGH_RHOPT</name>
<gene>
    <name evidence="1" type="primary">flgH</name>
    <name type="ordered locus">Rpal_4425</name>
</gene>
<reference key="1">
    <citation type="submission" date="2008-05" db="EMBL/GenBank/DDBJ databases">
        <title>Complete sequence of Rhodopseudomonas palustris TIE-1.</title>
        <authorList>
            <consortium name="US DOE Joint Genome Institute"/>
            <person name="Lucas S."/>
            <person name="Copeland A."/>
            <person name="Lapidus A."/>
            <person name="Glavina del Rio T."/>
            <person name="Dalin E."/>
            <person name="Tice H."/>
            <person name="Pitluck S."/>
            <person name="Chain P."/>
            <person name="Malfatti S."/>
            <person name="Shin M."/>
            <person name="Vergez L."/>
            <person name="Lang D."/>
            <person name="Schmutz J."/>
            <person name="Larimer F."/>
            <person name="Land M."/>
            <person name="Hauser L."/>
            <person name="Kyrpides N."/>
            <person name="Mikhailova N."/>
            <person name="Emerson D."/>
            <person name="Newman D.K."/>
            <person name="Roden E."/>
            <person name="Richardson P."/>
        </authorList>
    </citation>
    <scope>NUCLEOTIDE SEQUENCE [LARGE SCALE GENOMIC DNA]</scope>
    <source>
        <strain>TIE-1</strain>
    </source>
</reference>